<name>MURC_PECAS</name>
<proteinExistence type="inferred from homology"/>
<comment type="function">
    <text evidence="1">Cell wall formation.</text>
</comment>
<comment type="catalytic activity">
    <reaction evidence="1">
        <text>UDP-N-acetyl-alpha-D-muramate + L-alanine + ATP = UDP-N-acetyl-alpha-D-muramoyl-L-alanine + ADP + phosphate + H(+)</text>
        <dbReference type="Rhea" id="RHEA:23372"/>
        <dbReference type="ChEBI" id="CHEBI:15378"/>
        <dbReference type="ChEBI" id="CHEBI:30616"/>
        <dbReference type="ChEBI" id="CHEBI:43474"/>
        <dbReference type="ChEBI" id="CHEBI:57972"/>
        <dbReference type="ChEBI" id="CHEBI:70757"/>
        <dbReference type="ChEBI" id="CHEBI:83898"/>
        <dbReference type="ChEBI" id="CHEBI:456216"/>
        <dbReference type="EC" id="6.3.2.8"/>
    </reaction>
</comment>
<comment type="pathway">
    <text evidence="1">Cell wall biogenesis; peptidoglycan biosynthesis.</text>
</comment>
<comment type="subcellular location">
    <subcellularLocation>
        <location evidence="1">Cytoplasm</location>
    </subcellularLocation>
</comment>
<comment type="similarity">
    <text evidence="1">Belongs to the MurCDEF family.</text>
</comment>
<reference key="1">
    <citation type="journal article" date="2004" name="Proc. Natl. Acad. Sci. U.S.A.">
        <title>Genome sequence of the enterobacterial phytopathogen Erwinia carotovora subsp. atroseptica and characterization of virulence factors.</title>
        <authorList>
            <person name="Bell K.S."/>
            <person name="Sebaihia M."/>
            <person name="Pritchard L."/>
            <person name="Holden M.T.G."/>
            <person name="Hyman L.J."/>
            <person name="Holeva M.C."/>
            <person name="Thomson N.R."/>
            <person name="Bentley S.D."/>
            <person name="Churcher L.J.C."/>
            <person name="Mungall K."/>
            <person name="Atkin R."/>
            <person name="Bason N."/>
            <person name="Brooks K."/>
            <person name="Chillingworth T."/>
            <person name="Clark K."/>
            <person name="Doggett J."/>
            <person name="Fraser A."/>
            <person name="Hance Z."/>
            <person name="Hauser H."/>
            <person name="Jagels K."/>
            <person name="Moule S."/>
            <person name="Norbertczak H."/>
            <person name="Ormond D."/>
            <person name="Price C."/>
            <person name="Quail M.A."/>
            <person name="Sanders M."/>
            <person name="Walker D."/>
            <person name="Whitehead S."/>
            <person name="Salmond G.P.C."/>
            <person name="Birch P.R.J."/>
            <person name="Parkhill J."/>
            <person name="Toth I.K."/>
        </authorList>
    </citation>
    <scope>NUCLEOTIDE SEQUENCE [LARGE SCALE GENOMIC DNA]</scope>
    <source>
        <strain>SCRI 1043 / ATCC BAA-672</strain>
    </source>
</reference>
<organism>
    <name type="scientific">Pectobacterium atrosepticum (strain SCRI 1043 / ATCC BAA-672)</name>
    <name type="common">Erwinia carotovora subsp. atroseptica</name>
    <dbReference type="NCBI Taxonomy" id="218491"/>
    <lineage>
        <taxon>Bacteria</taxon>
        <taxon>Pseudomonadati</taxon>
        <taxon>Pseudomonadota</taxon>
        <taxon>Gammaproteobacteria</taxon>
        <taxon>Enterobacterales</taxon>
        <taxon>Pectobacteriaceae</taxon>
        <taxon>Pectobacterium</taxon>
    </lineage>
</organism>
<gene>
    <name evidence="1" type="primary">murC</name>
    <name type="ordered locus">ECA3814</name>
</gene>
<sequence length="486" mass="53031">MNTQQLAKLRSIVPEMHRVRHIHFVGIGGAGMGGIAEVLANEGYEISGSDLAPNAVTQQLTKLGAQIYFHHRAENVLNASVVVVSSAITADNPEIVAAHDARIPVIRRAEMLAELMRFRHGIAIAGTHGKTTTTAMVTSIYAEAGLDPTFVNGGLVKAAGTHARLGSSRYLIAEADESDASFLHLQPMVAIVTNIEADHMDTYQGDFENLKQTFINFLHNLPFYGQAVMCIDDAVIRELLPRVGRHITTYGFSDDADVRVAGYRQTGAQGHFTLERKDKTLLNVTLNAPGRHNALNAAAAVAVATDEGIDDEAILRALERFQGTSRRFDFLGEYPLELVNGQSGTAMLVDDYGHHPTEVDATIKAARAGWPDKRLVMIFQPHRYTRTRDLYDDFAHVLSQVDVLLMLDVYSAGESPIPGADSRSLCRTIRGRGKIDPILVTDMDTLPELLSQALRGEDLILVQGAGNIGKLARKLADSRLQPQISE</sequence>
<keyword id="KW-0067">ATP-binding</keyword>
<keyword id="KW-0131">Cell cycle</keyword>
<keyword id="KW-0132">Cell division</keyword>
<keyword id="KW-0133">Cell shape</keyword>
<keyword id="KW-0961">Cell wall biogenesis/degradation</keyword>
<keyword id="KW-0963">Cytoplasm</keyword>
<keyword id="KW-0436">Ligase</keyword>
<keyword id="KW-0547">Nucleotide-binding</keyword>
<keyword id="KW-0573">Peptidoglycan synthesis</keyword>
<keyword id="KW-1185">Reference proteome</keyword>
<evidence type="ECO:0000255" key="1">
    <source>
        <dbReference type="HAMAP-Rule" id="MF_00046"/>
    </source>
</evidence>
<feature type="chain" id="PRO_0000182093" description="UDP-N-acetylmuramate--L-alanine ligase">
    <location>
        <begin position="1"/>
        <end position="486"/>
    </location>
</feature>
<feature type="binding site" evidence="1">
    <location>
        <begin position="126"/>
        <end position="132"/>
    </location>
    <ligand>
        <name>ATP</name>
        <dbReference type="ChEBI" id="CHEBI:30616"/>
    </ligand>
</feature>
<dbReference type="EC" id="6.3.2.8" evidence="1"/>
<dbReference type="EMBL" id="BX950851">
    <property type="protein sequence ID" value="CAG76713.1"/>
    <property type="molecule type" value="Genomic_DNA"/>
</dbReference>
<dbReference type="RefSeq" id="WP_011095314.1">
    <property type="nucleotide sequence ID" value="NC_004547.2"/>
</dbReference>
<dbReference type="SMR" id="Q6D0I4"/>
<dbReference type="STRING" id="218491.ECA3814"/>
<dbReference type="GeneID" id="57210433"/>
<dbReference type="KEGG" id="eca:ECA3814"/>
<dbReference type="PATRIC" id="fig|218491.5.peg.3869"/>
<dbReference type="eggNOG" id="COG0773">
    <property type="taxonomic scope" value="Bacteria"/>
</dbReference>
<dbReference type="HOGENOM" id="CLU_028104_2_2_6"/>
<dbReference type="OrthoDB" id="9804126at2"/>
<dbReference type="UniPathway" id="UPA00219"/>
<dbReference type="Proteomes" id="UP000007966">
    <property type="component" value="Chromosome"/>
</dbReference>
<dbReference type="GO" id="GO:0005737">
    <property type="term" value="C:cytoplasm"/>
    <property type="evidence" value="ECO:0007669"/>
    <property type="project" value="UniProtKB-SubCell"/>
</dbReference>
<dbReference type="GO" id="GO:0005524">
    <property type="term" value="F:ATP binding"/>
    <property type="evidence" value="ECO:0007669"/>
    <property type="project" value="UniProtKB-UniRule"/>
</dbReference>
<dbReference type="GO" id="GO:0008763">
    <property type="term" value="F:UDP-N-acetylmuramate-L-alanine ligase activity"/>
    <property type="evidence" value="ECO:0007669"/>
    <property type="project" value="UniProtKB-UniRule"/>
</dbReference>
<dbReference type="GO" id="GO:0051301">
    <property type="term" value="P:cell division"/>
    <property type="evidence" value="ECO:0007669"/>
    <property type="project" value="UniProtKB-KW"/>
</dbReference>
<dbReference type="GO" id="GO:0071555">
    <property type="term" value="P:cell wall organization"/>
    <property type="evidence" value="ECO:0007669"/>
    <property type="project" value="UniProtKB-KW"/>
</dbReference>
<dbReference type="GO" id="GO:0009252">
    <property type="term" value="P:peptidoglycan biosynthetic process"/>
    <property type="evidence" value="ECO:0007669"/>
    <property type="project" value="UniProtKB-UniRule"/>
</dbReference>
<dbReference type="GO" id="GO:0008360">
    <property type="term" value="P:regulation of cell shape"/>
    <property type="evidence" value="ECO:0007669"/>
    <property type="project" value="UniProtKB-KW"/>
</dbReference>
<dbReference type="FunFam" id="3.40.1190.10:FF:000001">
    <property type="entry name" value="UDP-N-acetylmuramate--L-alanine ligase"/>
    <property type="match status" value="1"/>
</dbReference>
<dbReference type="FunFam" id="3.40.50.720:FF:000046">
    <property type="entry name" value="UDP-N-acetylmuramate--L-alanine ligase"/>
    <property type="match status" value="1"/>
</dbReference>
<dbReference type="FunFam" id="3.90.190.20:FF:000001">
    <property type="entry name" value="UDP-N-acetylmuramate--L-alanine ligase"/>
    <property type="match status" value="1"/>
</dbReference>
<dbReference type="Gene3D" id="3.90.190.20">
    <property type="entry name" value="Mur ligase, C-terminal domain"/>
    <property type="match status" value="1"/>
</dbReference>
<dbReference type="Gene3D" id="3.40.1190.10">
    <property type="entry name" value="Mur-like, catalytic domain"/>
    <property type="match status" value="1"/>
</dbReference>
<dbReference type="Gene3D" id="3.40.50.720">
    <property type="entry name" value="NAD(P)-binding Rossmann-like Domain"/>
    <property type="match status" value="1"/>
</dbReference>
<dbReference type="HAMAP" id="MF_00046">
    <property type="entry name" value="MurC"/>
    <property type="match status" value="1"/>
</dbReference>
<dbReference type="InterPro" id="IPR036565">
    <property type="entry name" value="Mur-like_cat_sf"/>
</dbReference>
<dbReference type="InterPro" id="IPR004101">
    <property type="entry name" value="Mur_ligase_C"/>
</dbReference>
<dbReference type="InterPro" id="IPR036615">
    <property type="entry name" value="Mur_ligase_C_dom_sf"/>
</dbReference>
<dbReference type="InterPro" id="IPR013221">
    <property type="entry name" value="Mur_ligase_cen"/>
</dbReference>
<dbReference type="InterPro" id="IPR000713">
    <property type="entry name" value="Mur_ligase_N"/>
</dbReference>
<dbReference type="InterPro" id="IPR050061">
    <property type="entry name" value="MurCDEF_pg_biosynth"/>
</dbReference>
<dbReference type="InterPro" id="IPR005758">
    <property type="entry name" value="UDP-N-AcMur_Ala_ligase_MurC"/>
</dbReference>
<dbReference type="NCBIfam" id="TIGR01082">
    <property type="entry name" value="murC"/>
    <property type="match status" value="1"/>
</dbReference>
<dbReference type="PANTHER" id="PTHR43445:SF3">
    <property type="entry name" value="UDP-N-ACETYLMURAMATE--L-ALANINE LIGASE"/>
    <property type="match status" value="1"/>
</dbReference>
<dbReference type="PANTHER" id="PTHR43445">
    <property type="entry name" value="UDP-N-ACETYLMURAMATE--L-ALANINE LIGASE-RELATED"/>
    <property type="match status" value="1"/>
</dbReference>
<dbReference type="Pfam" id="PF01225">
    <property type="entry name" value="Mur_ligase"/>
    <property type="match status" value="1"/>
</dbReference>
<dbReference type="Pfam" id="PF02875">
    <property type="entry name" value="Mur_ligase_C"/>
    <property type="match status" value="1"/>
</dbReference>
<dbReference type="Pfam" id="PF08245">
    <property type="entry name" value="Mur_ligase_M"/>
    <property type="match status" value="1"/>
</dbReference>
<dbReference type="SUPFAM" id="SSF51984">
    <property type="entry name" value="MurCD N-terminal domain"/>
    <property type="match status" value="1"/>
</dbReference>
<dbReference type="SUPFAM" id="SSF53623">
    <property type="entry name" value="MurD-like peptide ligases, catalytic domain"/>
    <property type="match status" value="1"/>
</dbReference>
<dbReference type="SUPFAM" id="SSF53244">
    <property type="entry name" value="MurD-like peptide ligases, peptide-binding domain"/>
    <property type="match status" value="1"/>
</dbReference>
<accession>Q6D0I4</accession>
<protein>
    <recommendedName>
        <fullName evidence="1">UDP-N-acetylmuramate--L-alanine ligase</fullName>
        <ecNumber evidence="1">6.3.2.8</ecNumber>
    </recommendedName>
    <alternativeName>
        <fullName evidence="1">UDP-N-acetylmuramoyl-L-alanine synthetase</fullName>
    </alternativeName>
</protein>